<feature type="chain" id="PRO_0000068108" description="Glucose-6-phosphate 1-dehydrogenase">
    <location>
        <begin position="1"/>
        <end position="494"/>
    </location>
</feature>
<feature type="active site" description="Proton acceptor" evidence="1">
    <location>
        <position position="242"/>
    </location>
</feature>
<feature type="binding site" evidence="1">
    <location>
        <position position="46"/>
    </location>
    <ligand>
        <name>NADP(+)</name>
        <dbReference type="ChEBI" id="CHEBI:58349"/>
    </ligand>
</feature>
<feature type="binding site" evidence="1">
    <location>
        <position position="150"/>
    </location>
    <ligand>
        <name>NADP(+)</name>
        <dbReference type="ChEBI" id="CHEBI:58349"/>
    </ligand>
</feature>
<feature type="binding site" evidence="1">
    <location>
        <position position="180"/>
    </location>
    <ligand>
        <name>substrate</name>
    </ligand>
</feature>
<feature type="binding site" evidence="1">
    <location>
        <position position="184"/>
    </location>
    <ligand>
        <name>substrate</name>
    </ligand>
</feature>
<feature type="binding site" evidence="1">
    <location>
        <position position="218"/>
    </location>
    <ligand>
        <name>substrate</name>
    </ligand>
</feature>
<feature type="binding site" evidence="1">
    <location>
        <position position="237"/>
    </location>
    <ligand>
        <name>substrate</name>
    </ligand>
</feature>
<feature type="binding site" evidence="1">
    <location>
        <position position="342"/>
    </location>
    <ligand>
        <name>substrate</name>
    </ligand>
</feature>
<proteinExistence type="inferred from homology"/>
<comment type="function">
    <text evidence="1">Catalyzes the oxidation of glucose 6-phosphate to 6-phosphogluconolactone.</text>
</comment>
<comment type="catalytic activity">
    <reaction evidence="1">
        <text>D-glucose 6-phosphate + NADP(+) = 6-phospho-D-glucono-1,5-lactone + NADPH + H(+)</text>
        <dbReference type="Rhea" id="RHEA:15841"/>
        <dbReference type="ChEBI" id="CHEBI:15378"/>
        <dbReference type="ChEBI" id="CHEBI:57783"/>
        <dbReference type="ChEBI" id="CHEBI:57955"/>
        <dbReference type="ChEBI" id="CHEBI:58349"/>
        <dbReference type="ChEBI" id="CHEBI:61548"/>
        <dbReference type="EC" id="1.1.1.49"/>
    </reaction>
</comment>
<comment type="pathway">
    <text evidence="1">Carbohydrate degradation; pentose phosphate pathway; D-ribulose 5-phosphate from D-glucose 6-phosphate (oxidative stage): step 1/3.</text>
</comment>
<comment type="similarity">
    <text evidence="1">Belongs to the glucose-6-phosphate dehydrogenase family.</text>
</comment>
<gene>
    <name evidence="1" type="primary">zwf</name>
</gene>
<organism>
    <name type="scientific">Aggregatibacter actinomycetemcomitans</name>
    <name type="common">Actinobacillus actinomycetemcomitans</name>
    <name type="synonym">Haemophilus actinomycetemcomitans</name>
    <dbReference type="NCBI Taxonomy" id="714"/>
    <lineage>
        <taxon>Bacteria</taxon>
        <taxon>Pseudomonadati</taxon>
        <taxon>Pseudomonadota</taxon>
        <taxon>Gammaproteobacteria</taxon>
        <taxon>Pasteurellales</taxon>
        <taxon>Pasteurellaceae</taxon>
        <taxon>Aggregatibacter</taxon>
    </lineage>
</organism>
<accession>P77809</accession>
<dbReference type="EC" id="1.1.1.49" evidence="1"/>
<dbReference type="EMBL" id="D88189">
    <property type="protein sequence ID" value="BAA13554.1"/>
    <property type="molecule type" value="Genomic_DNA"/>
</dbReference>
<dbReference type="RefSeq" id="WP_250128558.1">
    <property type="nucleotide sequence ID" value="NZ_JAJHPH010000017.1"/>
</dbReference>
<dbReference type="SMR" id="P77809"/>
<dbReference type="STRING" id="714.ACT75_04150"/>
<dbReference type="eggNOG" id="COG0364">
    <property type="taxonomic scope" value="Bacteria"/>
</dbReference>
<dbReference type="UniPathway" id="UPA00115">
    <property type="reaction ID" value="UER00408"/>
</dbReference>
<dbReference type="GO" id="GO:0005829">
    <property type="term" value="C:cytosol"/>
    <property type="evidence" value="ECO:0007669"/>
    <property type="project" value="TreeGrafter"/>
</dbReference>
<dbReference type="GO" id="GO:0004345">
    <property type="term" value="F:glucose-6-phosphate dehydrogenase activity"/>
    <property type="evidence" value="ECO:0007669"/>
    <property type="project" value="UniProtKB-UniRule"/>
</dbReference>
<dbReference type="GO" id="GO:0050661">
    <property type="term" value="F:NADP binding"/>
    <property type="evidence" value="ECO:0007669"/>
    <property type="project" value="UniProtKB-UniRule"/>
</dbReference>
<dbReference type="GO" id="GO:0006006">
    <property type="term" value="P:glucose metabolic process"/>
    <property type="evidence" value="ECO:0007669"/>
    <property type="project" value="UniProtKB-KW"/>
</dbReference>
<dbReference type="GO" id="GO:0009051">
    <property type="term" value="P:pentose-phosphate shunt, oxidative branch"/>
    <property type="evidence" value="ECO:0007669"/>
    <property type="project" value="TreeGrafter"/>
</dbReference>
<dbReference type="Gene3D" id="3.30.360.10">
    <property type="entry name" value="Dihydrodipicolinate Reductase, domain 2"/>
    <property type="match status" value="1"/>
</dbReference>
<dbReference type="Gene3D" id="3.40.50.720">
    <property type="entry name" value="NAD(P)-binding Rossmann-like Domain"/>
    <property type="match status" value="1"/>
</dbReference>
<dbReference type="HAMAP" id="MF_00966">
    <property type="entry name" value="G6PD"/>
    <property type="match status" value="1"/>
</dbReference>
<dbReference type="InterPro" id="IPR001282">
    <property type="entry name" value="G6P_DH"/>
</dbReference>
<dbReference type="InterPro" id="IPR019796">
    <property type="entry name" value="G6P_DH_AS"/>
</dbReference>
<dbReference type="InterPro" id="IPR022675">
    <property type="entry name" value="G6P_DH_C"/>
</dbReference>
<dbReference type="InterPro" id="IPR022674">
    <property type="entry name" value="G6P_DH_NAD-bd"/>
</dbReference>
<dbReference type="InterPro" id="IPR036291">
    <property type="entry name" value="NAD(P)-bd_dom_sf"/>
</dbReference>
<dbReference type="NCBIfam" id="TIGR00871">
    <property type="entry name" value="zwf"/>
    <property type="match status" value="1"/>
</dbReference>
<dbReference type="PANTHER" id="PTHR23429:SF0">
    <property type="entry name" value="GLUCOSE-6-PHOSPHATE 1-DEHYDROGENASE"/>
    <property type="match status" value="1"/>
</dbReference>
<dbReference type="PANTHER" id="PTHR23429">
    <property type="entry name" value="GLUCOSE-6-PHOSPHATE 1-DEHYDROGENASE G6PD"/>
    <property type="match status" value="1"/>
</dbReference>
<dbReference type="Pfam" id="PF02781">
    <property type="entry name" value="G6PD_C"/>
    <property type="match status" value="1"/>
</dbReference>
<dbReference type="Pfam" id="PF00479">
    <property type="entry name" value="G6PD_N"/>
    <property type="match status" value="1"/>
</dbReference>
<dbReference type="PIRSF" id="PIRSF000110">
    <property type="entry name" value="G6PD"/>
    <property type="match status" value="1"/>
</dbReference>
<dbReference type="PRINTS" id="PR00079">
    <property type="entry name" value="G6PDHDRGNASE"/>
</dbReference>
<dbReference type="SUPFAM" id="SSF55347">
    <property type="entry name" value="Glyceraldehyde-3-phosphate dehydrogenase-like, C-terminal domain"/>
    <property type="match status" value="1"/>
</dbReference>
<dbReference type="SUPFAM" id="SSF51735">
    <property type="entry name" value="NAD(P)-binding Rossmann-fold domains"/>
    <property type="match status" value="1"/>
</dbReference>
<dbReference type="PROSITE" id="PS00069">
    <property type="entry name" value="G6P_DEHYDROGENASE"/>
    <property type="match status" value="1"/>
</dbReference>
<evidence type="ECO:0000255" key="1">
    <source>
        <dbReference type="HAMAP-Rule" id="MF_00966"/>
    </source>
</evidence>
<keyword id="KW-0119">Carbohydrate metabolism</keyword>
<keyword id="KW-0313">Glucose metabolism</keyword>
<keyword id="KW-0521">NADP</keyword>
<keyword id="KW-0560">Oxidoreductase</keyword>
<protein>
    <recommendedName>
        <fullName evidence="1">Glucose-6-phosphate 1-dehydrogenase</fullName>
        <shortName evidence="1">G6PD</shortName>
        <ecNumber evidence="1">1.1.1.49</ecNumber>
    </recommendedName>
</protein>
<name>G6PD_AGGAC</name>
<sequence>MKAENCCIVIFGASGDLTYRKLIPALYNLYKIDRLGEDFSVLGVARTELNDKSFREKMRQTLIKNEGAKGECLEQFCSHLYYQAVNTADKADYAKLVPRLDELHDTYRTEGNTLYYLSTPPSLYGVIPECLGEHGLNKEDRGWKRLIVEKPFGYDRETAEALDIQIHRFFEEHQIYRIDHYLGKETVQNLLVLRFSNGWFEPLWNRNFIDYIEITGAESIGVEERGGYYDGSGAMRDMFQNHLLQVLAMVAMEPPVIINANSMRDEVAKVLHCLRPLTQEDVEHNLVLGQYVAGEVDGEWVKGYLEEKGVPPYSTTETYMALRCEIENWRWAGVPFYVRTGKRLPARVTEIVIHFKTTPHPVFSQNAPENKLIIRIQPDEGISMRFGLKKPGAGFEAKEVSMDFRYADLAGATVMTAYERLLLDAMKGDATLFARTDAVHAAWKFVQPILNYKAQGGRLYDYEAGTWGPTAADKLIAKSGRVWRRPSGLMKKKV</sequence>
<reference key="1">
    <citation type="journal article" date="1997" name="Biochem. Biophys. Res. Commun.">
        <title>The gnd gene encoding a novel 6-phosphogluconate dehydrogenase and its adjacent region of Actinobacillus actinomycetemcomitans chromosomal DNA.</title>
        <authorList>
            <person name="Yoshida Y."/>
            <person name="Nakano Y."/>
            <person name="Yamashita Y."/>
            <person name="Koga T."/>
        </authorList>
    </citation>
    <scope>NUCLEOTIDE SEQUENCE [GENOMIC DNA]</scope>
    <source>
        <strain>ATCC 43718 / FDC Y4 / Serotype b</strain>
    </source>
</reference>